<evidence type="ECO:0000255" key="1">
    <source>
        <dbReference type="HAMAP-Rule" id="MF_00378"/>
    </source>
</evidence>
<name>EX7L_SHEFN</name>
<proteinExistence type="inferred from homology"/>
<organism>
    <name type="scientific">Shewanella frigidimarina (strain NCIMB 400)</name>
    <dbReference type="NCBI Taxonomy" id="318167"/>
    <lineage>
        <taxon>Bacteria</taxon>
        <taxon>Pseudomonadati</taxon>
        <taxon>Pseudomonadota</taxon>
        <taxon>Gammaproteobacteria</taxon>
        <taxon>Alteromonadales</taxon>
        <taxon>Shewanellaceae</taxon>
        <taxon>Shewanella</taxon>
    </lineage>
</organism>
<comment type="function">
    <text evidence="1">Bidirectionally degrades single-stranded DNA into large acid-insoluble oligonucleotides, which are then degraded further into small acid-soluble oligonucleotides.</text>
</comment>
<comment type="catalytic activity">
    <reaction evidence="1">
        <text>Exonucleolytic cleavage in either 5'- to 3'- or 3'- to 5'-direction to yield nucleoside 5'-phosphates.</text>
        <dbReference type="EC" id="3.1.11.6"/>
    </reaction>
</comment>
<comment type="subunit">
    <text evidence="1">Heterooligomer composed of large and small subunits.</text>
</comment>
<comment type="subcellular location">
    <subcellularLocation>
        <location evidence="1">Cytoplasm</location>
    </subcellularLocation>
</comment>
<comment type="similarity">
    <text evidence="1">Belongs to the XseA family.</text>
</comment>
<accession>Q085S6</accession>
<protein>
    <recommendedName>
        <fullName evidence="1">Exodeoxyribonuclease 7 large subunit</fullName>
        <ecNumber evidence="1">3.1.11.6</ecNumber>
    </recommendedName>
    <alternativeName>
        <fullName evidence="1">Exodeoxyribonuclease VII large subunit</fullName>
        <shortName evidence="1">Exonuclease VII large subunit</shortName>
    </alternativeName>
</protein>
<dbReference type="EC" id="3.1.11.6" evidence="1"/>
<dbReference type="EMBL" id="CP000447">
    <property type="protein sequence ID" value="ABI70989.1"/>
    <property type="molecule type" value="Genomic_DNA"/>
</dbReference>
<dbReference type="SMR" id="Q085S6"/>
<dbReference type="STRING" id="318167.Sfri_1136"/>
<dbReference type="KEGG" id="sfr:Sfri_1136"/>
<dbReference type="eggNOG" id="COG1570">
    <property type="taxonomic scope" value="Bacteria"/>
</dbReference>
<dbReference type="HOGENOM" id="CLU_023625_3_1_6"/>
<dbReference type="Proteomes" id="UP000000684">
    <property type="component" value="Chromosome"/>
</dbReference>
<dbReference type="GO" id="GO:0005737">
    <property type="term" value="C:cytoplasm"/>
    <property type="evidence" value="ECO:0007669"/>
    <property type="project" value="UniProtKB-SubCell"/>
</dbReference>
<dbReference type="GO" id="GO:0009318">
    <property type="term" value="C:exodeoxyribonuclease VII complex"/>
    <property type="evidence" value="ECO:0007669"/>
    <property type="project" value="InterPro"/>
</dbReference>
<dbReference type="GO" id="GO:0008855">
    <property type="term" value="F:exodeoxyribonuclease VII activity"/>
    <property type="evidence" value="ECO:0007669"/>
    <property type="project" value="UniProtKB-UniRule"/>
</dbReference>
<dbReference type="GO" id="GO:0003676">
    <property type="term" value="F:nucleic acid binding"/>
    <property type="evidence" value="ECO:0007669"/>
    <property type="project" value="InterPro"/>
</dbReference>
<dbReference type="GO" id="GO:0006308">
    <property type="term" value="P:DNA catabolic process"/>
    <property type="evidence" value="ECO:0007669"/>
    <property type="project" value="UniProtKB-UniRule"/>
</dbReference>
<dbReference type="CDD" id="cd04489">
    <property type="entry name" value="ExoVII_LU_OBF"/>
    <property type="match status" value="1"/>
</dbReference>
<dbReference type="HAMAP" id="MF_00378">
    <property type="entry name" value="Exonuc_7_L"/>
    <property type="match status" value="1"/>
</dbReference>
<dbReference type="InterPro" id="IPR003753">
    <property type="entry name" value="Exonuc_VII_L"/>
</dbReference>
<dbReference type="InterPro" id="IPR020579">
    <property type="entry name" value="Exonuc_VII_lsu_C"/>
</dbReference>
<dbReference type="InterPro" id="IPR025824">
    <property type="entry name" value="OB-fold_nuc-bd_dom"/>
</dbReference>
<dbReference type="NCBIfam" id="TIGR00237">
    <property type="entry name" value="xseA"/>
    <property type="match status" value="1"/>
</dbReference>
<dbReference type="PANTHER" id="PTHR30008">
    <property type="entry name" value="EXODEOXYRIBONUCLEASE 7 LARGE SUBUNIT"/>
    <property type="match status" value="1"/>
</dbReference>
<dbReference type="PANTHER" id="PTHR30008:SF0">
    <property type="entry name" value="EXODEOXYRIBONUCLEASE 7 LARGE SUBUNIT"/>
    <property type="match status" value="1"/>
</dbReference>
<dbReference type="Pfam" id="PF02601">
    <property type="entry name" value="Exonuc_VII_L"/>
    <property type="match status" value="1"/>
</dbReference>
<dbReference type="Pfam" id="PF13742">
    <property type="entry name" value="tRNA_anti_2"/>
    <property type="match status" value="1"/>
</dbReference>
<feature type="chain" id="PRO_0000273685" description="Exodeoxyribonuclease 7 large subunit">
    <location>
        <begin position="1"/>
        <end position="450"/>
    </location>
</feature>
<reference key="1">
    <citation type="submission" date="2006-08" db="EMBL/GenBank/DDBJ databases">
        <title>Complete sequence of Shewanella frigidimarina NCIMB 400.</title>
        <authorList>
            <consortium name="US DOE Joint Genome Institute"/>
            <person name="Copeland A."/>
            <person name="Lucas S."/>
            <person name="Lapidus A."/>
            <person name="Barry K."/>
            <person name="Detter J.C."/>
            <person name="Glavina del Rio T."/>
            <person name="Hammon N."/>
            <person name="Israni S."/>
            <person name="Dalin E."/>
            <person name="Tice H."/>
            <person name="Pitluck S."/>
            <person name="Fredrickson J.K."/>
            <person name="Kolker E."/>
            <person name="McCuel L.A."/>
            <person name="DiChristina T."/>
            <person name="Nealson K.H."/>
            <person name="Newman D."/>
            <person name="Tiedje J.M."/>
            <person name="Zhou J."/>
            <person name="Romine M.F."/>
            <person name="Culley D.E."/>
            <person name="Serres M."/>
            <person name="Chertkov O."/>
            <person name="Brettin T."/>
            <person name="Bruce D."/>
            <person name="Han C."/>
            <person name="Tapia R."/>
            <person name="Gilna P."/>
            <person name="Schmutz J."/>
            <person name="Larimer F."/>
            <person name="Land M."/>
            <person name="Hauser L."/>
            <person name="Kyrpides N."/>
            <person name="Mikhailova N."/>
            <person name="Richardson P."/>
        </authorList>
    </citation>
    <scope>NUCLEOTIDE SEQUENCE [LARGE SCALE GENOMIC DNA]</scope>
    <source>
        <strain>NCIMB 400</strain>
    </source>
</reference>
<gene>
    <name evidence="1" type="primary">xseA</name>
    <name type="ordered locus">Sfri_1136</name>
</gene>
<keyword id="KW-0963">Cytoplasm</keyword>
<keyword id="KW-0269">Exonuclease</keyword>
<keyword id="KW-0378">Hydrolase</keyword>
<keyword id="KW-0540">Nuclease</keyword>
<keyword id="KW-1185">Reference proteome</keyword>
<sequence length="450" mass="50219">MRTLMSATKNNVYSVSQLNSEVRHILEGQIGKIWLNGEISNFSAPSSGHWYLTLKDAHSQVRCAMFKGRNQSVRFKPVNGQQVLIKGAISVYEPRGDYQLLLESMLPAGDGLLAQEFEALKLKLAAEGLFALETKRPIPTNIQRIGVITSATGAALRDILHVLARRDPSIEVVVYPTQVQGATASQLICQAIVTANQRMEVDVLLLTRGGGSLEDLWCFNSEHLAHAIYNSALPVVSAVGHEIDTTISDYVADVRAPTPSAGAELLSKDKGNKAEKLALLLSRLQQGMKHYQLQQYGRLTQLSHQLQRHEPQHKLQQFEQRFDEIQMRLENALQHKLSRLTLRHQQLHNRLQQRSPVNTLTLEKQRLGYLIERFNDASKDYFKQAESRVSQAAHNLDTVSPLATLSRGYSITSTNEHVIENANQLSNGDVIHTRLKQGSVTSTVTDVSTK</sequence>